<comment type="catalytic activity">
    <reaction evidence="1">
        <text>tRNA(Cys) + L-cysteine + ATP = L-cysteinyl-tRNA(Cys) + AMP + diphosphate</text>
        <dbReference type="Rhea" id="RHEA:17773"/>
        <dbReference type="Rhea" id="RHEA-COMP:9661"/>
        <dbReference type="Rhea" id="RHEA-COMP:9679"/>
        <dbReference type="ChEBI" id="CHEBI:30616"/>
        <dbReference type="ChEBI" id="CHEBI:33019"/>
        <dbReference type="ChEBI" id="CHEBI:35235"/>
        <dbReference type="ChEBI" id="CHEBI:78442"/>
        <dbReference type="ChEBI" id="CHEBI:78517"/>
        <dbReference type="ChEBI" id="CHEBI:456215"/>
        <dbReference type="EC" id="6.1.1.16"/>
    </reaction>
</comment>
<comment type="cofactor">
    <cofactor evidence="1">
        <name>Zn(2+)</name>
        <dbReference type="ChEBI" id="CHEBI:29105"/>
    </cofactor>
    <text evidence="1">Binds 1 zinc ion per subunit.</text>
</comment>
<comment type="subunit">
    <text evidence="1">Monomer.</text>
</comment>
<comment type="subcellular location">
    <subcellularLocation>
        <location evidence="1">Cytoplasm</location>
    </subcellularLocation>
</comment>
<comment type="similarity">
    <text evidence="1">Belongs to the class-I aminoacyl-tRNA synthetase family.</text>
</comment>
<proteinExistence type="inferred from homology"/>
<accession>C0RI19</accession>
<reference key="1">
    <citation type="submission" date="2009-03" db="EMBL/GenBank/DDBJ databases">
        <title>Brucella melitensis ATCC 23457 whole genome shotgun sequencing project.</title>
        <authorList>
            <person name="Setubal J.C."/>
            <person name="Boyle S."/>
            <person name="Crasta O.R."/>
            <person name="Gillespie J.J."/>
            <person name="Kenyon R.W."/>
            <person name="Lu J."/>
            <person name="Mane S."/>
            <person name="Nagrani S."/>
            <person name="Shallom J.M."/>
            <person name="Shallom S."/>
            <person name="Shukla M."/>
            <person name="Snyder E.E."/>
            <person name="Sobral B.W."/>
            <person name="Wattam A.R."/>
            <person name="Will R."/>
            <person name="Williams K."/>
            <person name="Yoo H."/>
            <person name="Munk C."/>
            <person name="Tapia R."/>
            <person name="Han C."/>
            <person name="Detter J.C."/>
            <person name="Bruce D."/>
            <person name="Brettin T.S."/>
        </authorList>
    </citation>
    <scope>NUCLEOTIDE SEQUENCE [LARGE SCALE GENOMIC DNA]</scope>
    <source>
        <strain>ATCC 23457</strain>
    </source>
</reference>
<dbReference type="EC" id="6.1.1.16" evidence="1"/>
<dbReference type="EMBL" id="CP001488">
    <property type="protein sequence ID" value="ACO00477.1"/>
    <property type="molecule type" value="Genomic_DNA"/>
</dbReference>
<dbReference type="RefSeq" id="WP_004683417.1">
    <property type="nucleotide sequence ID" value="NC_012441.1"/>
</dbReference>
<dbReference type="SMR" id="C0RI19"/>
<dbReference type="GeneID" id="29594111"/>
<dbReference type="KEGG" id="bmi:BMEA_A0714"/>
<dbReference type="HOGENOM" id="CLU_013528_0_1_5"/>
<dbReference type="Proteomes" id="UP000001748">
    <property type="component" value="Chromosome I"/>
</dbReference>
<dbReference type="GO" id="GO:0005829">
    <property type="term" value="C:cytosol"/>
    <property type="evidence" value="ECO:0007669"/>
    <property type="project" value="TreeGrafter"/>
</dbReference>
<dbReference type="GO" id="GO:0005524">
    <property type="term" value="F:ATP binding"/>
    <property type="evidence" value="ECO:0007669"/>
    <property type="project" value="UniProtKB-UniRule"/>
</dbReference>
<dbReference type="GO" id="GO:0004817">
    <property type="term" value="F:cysteine-tRNA ligase activity"/>
    <property type="evidence" value="ECO:0007669"/>
    <property type="project" value="UniProtKB-UniRule"/>
</dbReference>
<dbReference type="GO" id="GO:0008270">
    <property type="term" value="F:zinc ion binding"/>
    <property type="evidence" value="ECO:0007669"/>
    <property type="project" value="UniProtKB-UniRule"/>
</dbReference>
<dbReference type="GO" id="GO:0006423">
    <property type="term" value="P:cysteinyl-tRNA aminoacylation"/>
    <property type="evidence" value="ECO:0007669"/>
    <property type="project" value="UniProtKB-UniRule"/>
</dbReference>
<dbReference type="CDD" id="cd00672">
    <property type="entry name" value="CysRS_core"/>
    <property type="match status" value="1"/>
</dbReference>
<dbReference type="Gene3D" id="1.20.120.1910">
    <property type="entry name" value="Cysteine-tRNA ligase, C-terminal anti-codon recognition domain"/>
    <property type="match status" value="1"/>
</dbReference>
<dbReference type="Gene3D" id="3.40.50.620">
    <property type="entry name" value="HUPs"/>
    <property type="match status" value="1"/>
</dbReference>
<dbReference type="HAMAP" id="MF_00041">
    <property type="entry name" value="Cys_tRNA_synth"/>
    <property type="match status" value="1"/>
</dbReference>
<dbReference type="InterPro" id="IPR015803">
    <property type="entry name" value="Cys-tRNA-ligase"/>
</dbReference>
<dbReference type="InterPro" id="IPR024909">
    <property type="entry name" value="Cys-tRNA/MSH_ligase"/>
</dbReference>
<dbReference type="InterPro" id="IPR014729">
    <property type="entry name" value="Rossmann-like_a/b/a_fold"/>
</dbReference>
<dbReference type="InterPro" id="IPR032678">
    <property type="entry name" value="tRNA-synt_1_cat_dom"/>
</dbReference>
<dbReference type="InterPro" id="IPR009080">
    <property type="entry name" value="tRNAsynth_Ia_anticodon-bd"/>
</dbReference>
<dbReference type="NCBIfam" id="TIGR00435">
    <property type="entry name" value="cysS"/>
    <property type="match status" value="1"/>
</dbReference>
<dbReference type="PANTHER" id="PTHR10890:SF3">
    <property type="entry name" value="CYSTEINE--TRNA LIGASE, CYTOPLASMIC"/>
    <property type="match status" value="1"/>
</dbReference>
<dbReference type="PANTHER" id="PTHR10890">
    <property type="entry name" value="CYSTEINYL-TRNA SYNTHETASE"/>
    <property type="match status" value="1"/>
</dbReference>
<dbReference type="Pfam" id="PF01406">
    <property type="entry name" value="tRNA-synt_1e"/>
    <property type="match status" value="1"/>
</dbReference>
<dbReference type="PRINTS" id="PR00983">
    <property type="entry name" value="TRNASYNTHCYS"/>
</dbReference>
<dbReference type="SUPFAM" id="SSF47323">
    <property type="entry name" value="Anticodon-binding domain of a subclass of class I aminoacyl-tRNA synthetases"/>
    <property type="match status" value="1"/>
</dbReference>
<dbReference type="SUPFAM" id="SSF52374">
    <property type="entry name" value="Nucleotidylyl transferase"/>
    <property type="match status" value="1"/>
</dbReference>
<name>SYC_BRUMB</name>
<protein>
    <recommendedName>
        <fullName evidence="1">Cysteine--tRNA ligase</fullName>
        <ecNumber evidence="1">6.1.1.16</ecNumber>
    </recommendedName>
    <alternativeName>
        <fullName evidence="1">Cysteinyl-tRNA synthetase</fullName>
        <shortName evidence="1">CysRS</shortName>
    </alternativeName>
</protein>
<keyword id="KW-0030">Aminoacyl-tRNA synthetase</keyword>
<keyword id="KW-0067">ATP-binding</keyword>
<keyword id="KW-0963">Cytoplasm</keyword>
<keyword id="KW-0436">Ligase</keyword>
<keyword id="KW-0479">Metal-binding</keyword>
<keyword id="KW-0547">Nucleotide-binding</keyword>
<keyword id="KW-0648">Protein biosynthesis</keyword>
<keyword id="KW-0862">Zinc</keyword>
<evidence type="ECO:0000255" key="1">
    <source>
        <dbReference type="HAMAP-Rule" id="MF_00041"/>
    </source>
</evidence>
<sequence length="506" mass="56303">MPDTTPQLRLYNTLTRTKEAFAPIDAKNVRMYVCGPTVYDFAHIGNARPVIVFDVLFRLLRHVYGAQHVTYARNITDVDDKINARAARDYPDLPFNEAIRKVTESTNAQFQADVTALGNLQPTVQPRATEHMDEMRAMIDRLVQRGVAYVAQDHVLFSPSAMNARKGPRYGALARRSLDEMLAGARVDVASYKRDEMDFVLWKPSKKGEPGWPSPAGIETLGRPGWHIECSAMSMAKLLEPFGGGLKCDDPERNQFDIHGGGIDLVFPHHENEIAQSCCALGTERMANIWMHNGFLQVEGQKMSKSLGNFITIRDVLNDGLPQLGEWGDNTVRDRWAGLAARLSMLQTHYREPINWTAQRLAESADELHRWYGLLRDEGFGAPEKLSHASAVAAALCDDLNSWAAITALRQAFKVRDVAALGEGMALMGLLDPYFVTASDVPIFARADVDASAIAARIAERLNFINAKNWAEADRIRDELLQEGVQLKDSKDPATGERITTWDVVG</sequence>
<organism>
    <name type="scientific">Brucella melitensis biotype 2 (strain ATCC 23457)</name>
    <dbReference type="NCBI Taxonomy" id="546272"/>
    <lineage>
        <taxon>Bacteria</taxon>
        <taxon>Pseudomonadati</taxon>
        <taxon>Pseudomonadota</taxon>
        <taxon>Alphaproteobacteria</taxon>
        <taxon>Hyphomicrobiales</taxon>
        <taxon>Brucellaceae</taxon>
        <taxon>Brucella/Ochrobactrum group</taxon>
        <taxon>Brucella</taxon>
    </lineage>
</organism>
<gene>
    <name evidence="1" type="primary">cysS</name>
    <name type="ordered locus">BMEA_A0714</name>
</gene>
<feature type="chain" id="PRO_1000199046" description="Cysteine--tRNA ligase">
    <location>
        <begin position="1"/>
        <end position="506"/>
    </location>
</feature>
<feature type="short sequence motif" description="'HIGH' region">
    <location>
        <begin position="36"/>
        <end position="46"/>
    </location>
</feature>
<feature type="short sequence motif" description="'KMSKS' region">
    <location>
        <begin position="302"/>
        <end position="306"/>
    </location>
</feature>
<feature type="binding site" evidence="1">
    <location>
        <position position="34"/>
    </location>
    <ligand>
        <name>Zn(2+)</name>
        <dbReference type="ChEBI" id="CHEBI:29105"/>
    </ligand>
</feature>
<feature type="binding site" evidence="1">
    <location>
        <position position="230"/>
    </location>
    <ligand>
        <name>Zn(2+)</name>
        <dbReference type="ChEBI" id="CHEBI:29105"/>
    </ligand>
</feature>
<feature type="binding site" evidence="1">
    <location>
        <position position="269"/>
    </location>
    <ligand>
        <name>Zn(2+)</name>
        <dbReference type="ChEBI" id="CHEBI:29105"/>
    </ligand>
</feature>
<feature type="binding site" evidence="1">
    <location>
        <position position="273"/>
    </location>
    <ligand>
        <name>Zn(2+)</name>
        <dbReference type="ChEBI" id="CHEBI:29105"/>
    </ligand>
</feature>
<feature type="binding site" evidence="1">
    <location>
        <position position="305"/>
    </location>
    <ligand>
        <name>ATP</name>
        <dbReference type="ChEBI" id="CHEBI:30616"/>
    </ligand>
</feature>